<proteinExistence type="evidence at protein level"/>
<reference key="1">
    <citation type="journal article" date="2000" name="Nature">
        <title>Sequence and analysis of chromosome 3 of the plant Arabidopsis thaliana.</title>
        <authorList>
            <person name="Salanoubat M."/>
            <person name="Lemcke K."/>
            <person name="Rieger M."/>
            <person name="Ansorge W."/>
            <person name="Unseld M."/>
            <person name="Fartmann B."/>
            <person name="Valle G."/>
            <person name="Bloecker H."/>
            <person name="Perez-Alonso M."/>
            <person name="Obermaier B."/>
            <person name="Delseny M."/>
            <person name="Boutry M."/>
            <person name="Grivell L.A."/>
            <person name="Mache R."/>
            <person name="Puigdomenech P."/>
            <person name="De Simone V."/>
            <person name="Choisne N."/>
            <person name="Artiguenave F."/>
            <person name="Robert C."/>
            <person name="Brottier P."/>
            <person name="Wincker P."/>
            <person name="Cattolico L."/>
            <person name="Weissenbach J."/>
            <person name="Saurin W."/>
            <person name="Quetier F."/>
            <person name="Schaefer M."/>
            <person name="Mueller-Auer S."/>
            <person name="Gabel C."/>
            <person name="Fuchs M."/>
            <person name="Benes V."/>
            <person name="Wurmbach E."/>
            <person name="Drzonek H."/>
            <person name="Erfle H."/>
            <person name="Jordan N."/>
            <person name="Bangert S."/>
            <person name="Wiedelmann R."/>
            <person name="Kranz H."/>
            <person name="Voss H."/>
            <person name="Holland R."/>
            <person name="Brandt P."/>
            <person name="Nyakatura G."/>
            <person name="Vezzi A."/>
            <person name="D'Angelo M."/>
            <person name="Pallavicini A."/>
            <person name="Toppo S."/>
            <person name="Simionati B."/>
            <person name="Conrad A."/>
            <person name="Hornischer K."/>
            <person name="Kauer G."/>
            <person name="Loehnert T.-H."/>
            <person name="Nordsiek G."/>
            <person name="Reichelt J."/>
            <person name="Scharfe M."/>
            <person name="Schoen O."/>
            <person name="Bargues M."/>
            <person name="Terol J."/>
            <person name="Climent J."/>
            <person name="Navarro P."/>
            <person name="Collado C."/>
            <person name="Perez-Perez A."/>
            <person name="Ottenwaelder B."/>
            <person name="Duchemin D."/>
            <person name="Cooke R."/>
            <person name="Laudie M."/>
            <person name="Berger-Llauro C."/>
            <person name="Purnelle B."/>
            <person name="Masuy D."/>
            <person name="de Haan M."/>
            <person name="Maarse A.C."/>
            <person name="Alcaraz J.-P."/>
            <person name="Cottet A."/>
            <person name="Casacuberta E."/>
            <person name="Monfort A."/>
            <person name="Argiriou A."/>
            <person name="Flores M."/>
            <person name="Liguori R."/>
            <person name="Vitale D."/>
            <person name="Mannhaupt G."/>
            <person name="Haase D."/>
            <person name="Schoof H."/>
            <person name="Rudd S."/>
            <person name="Zaccaria P."/>
            <person name="Mewes H.-W."/>
            <person name="Mayer K.F.X."/>
            <person name="Kaul S."/>
            <person name="Town C.D."/>
            <person name="Koo H.L."/>
            <person name="Tallon L.J."/>
            <person name="Jenkins J."/>
            <person name="Rooney T."/>
            <person name="Rizzo M."/>
            <person name="Walts A."/>
            <person name="Utterback T."/>
            <person name="Fujii C.Y."/>
            <person name="Shea T.P."/>
            <person name="Creasy T.H."/>
            <person name="Haas B."/>
            <person name="Maiti R."/>
            <person name="Wu D."/>
            <person name="Peterson J."/>
            <person name="Van Aken S."/>
            <person name="Pai G."/>
            <person name="Militscher J."/>
            <person name="Sellers P."/>
            <person name="Gill J.E."/>
            <person name="Feldblyum T.V."/>
            <person name="Preuss D."/>
            <person name="Lin X."/>
            <person name="Nierman W.C."/>
            <person name="Salzberg S.L."/>
            <person name="White O."/>
            <person name="Venter J.C."/>
            <person name="Fraser C.M."/>
            <person name="Kaneko T."/>
            <person name="Nakamura Y."/>
            <person name="Sato S."/>
            <person name="Kato T."/>
            <person name="Asamizu E."/>
            <person name="Sasamoto S."/>
            <person name="Kimura T."/>
            <person name="Idesawa K."/>
            <person name="Kawashima K."/>
            <person name="Kishida Y."/>
            <person name="Kiyokawa C."/>
            <person name="Kohara M."/>
            <person name="Matsumoto M."/>
            <person name="Matsuno A."/>
            <person name="Muraki A."/>
            <person name="Nakayama S."/>
            <person name="Nakazaki N."/>
            <person name="Shinpo S."/>
            <person name="Takeuchi C."/>
            <person name="Wada T."/>
            <person name="Watanabe A."/>
            <person name="Yamada M."/>
            <person name="Yasuda M."/>
            <person name="Tabata S."/>
        </authorList>
    </citation>
    <scope>NUCLEOTIDE SEQUENCE [LARGE SCALE GENOMIC DNA]</scope>
    <source>
        <strain>cv. Columbia</strain>
    </source>
</reference>
<reference key="2">
    <citation type="journal article" date="2017" name="Plant J.">
        <title>Araport11: a complete reannotation of the Arabidopsis thaliana reference genome.</title>
        <authorList>
            <person name="Cheng C.Y."/>
            <person name="Krishnakumar V."/>
            <person name="Chan A.P."/>
            <person name="Thibaud-Nissen F."/>
            <person name="Schobel S."/>
            <person name="Town C.D."/>
        </authorList>
    </citation>
    <scope>GENOME REANNOTATION</scope>
    <source>
        <strain>cv. Columbia</strain>
    </source>
</reference>
<reference key="3">
    <citation type="journal article" date="2008" name="Plant Physiol.">
        <title>Transcriptome analyses show changes in gene expression to accompany pollen germination and tube growth in Arabidopsis.</title>
        <authorList>
            <person name="Wang Y."/>
            <person name="Zhang W.Z."/>
            <person name="Song L.F."/>
            <person name="Zou J.J."/>
            <person name="Su Z."/>
            <person name="Wu W.H."/>
        </authorList>
    </citation>
    <scope>DEVELOPMENTAL STAGE</scope>
</reference>
<reference key="4">
    <citation type="journal article" date="2013" name="Curr. Biol.">
        <title>Three MYB transcription factors control pollen tube differentiation required for sperm release.</title>
        <authorList>
            <person name="Leydon A.R."/>
            <person name="Beale K.M."/>
            <person name="Woroniecka K."/>
            <person name="Castner E."/>
            <person name="Chen J."/>
            <person name="Horgan C."/>
            <person name="Palanivelu R."/>
            <person name="Johnson M.A."/>
        </authorList>
    </citation>
    <scope>DEVELOPMENTAL STAGE</scope>
</reference>
<reference key="5">
    <citation type="journal article" date="2017" name="Mol. Plant">
        <title>Jasmonic acid oxidase 2 hydroxylates jasmonic acid and represses basal defense and resistance responses against Botrytis cinerea infection.</title>
        <authorList>
            <person name="Smirnova E."/>
            <person name="Marquis V."/>
            <person name="Poirier L."/>
            <person name="Aubert Y."/>
            <person name="Zumsteg J."/>
            <person name="Menard R."/>
            <person name="Miesch L."/>
            <person name="Heitz T."/>
        </authorList>
    </citation>
    <scope>INDUCTION BY WOUNDING</scope>
</reference>
<reference key="6">
    <citation type="journal article" date="2017" name="Proc. Natl. Acad. Sci. U.S.A.">
        <title>Arabidopsis JASMONATE-INDUCED OXYGENASES down-regulate plant immunity by hydroxylation and inactivation of the hormone jasmonic acid.</title>
        <authorList>
            <person name="Caarls L."/>
            <person name="Elberse J."/>
            <person name="Awwanah M."/>
            <person name="Ludwig N.R."/>
            <person name="de Vries M."/>
            <person name="Zeilmaker T."/>
            <person name="Van Wees S.C.M."/>
            <person name="Schuurink R.C."/>
            <person name="Van den Ackerveken G."/>
        </authorList>
    </citation>
    <scope>FUNCTION</scope>
    <scope>CATALYTIC ACTIVITY</scope>
    <scope>COFACTOR</scope>
    <scope>INDUCTION</scope>
    <scope>DISRUPTION PHENOTYPE</scope>
</reference>
<accession>Q9SRM3</accession>
<organism>
    <name type="scientific">Arabidopsis thaliana</name>
    <name type="common">Mouse-ear cress</name>
    <dbReference type="NCBI Taxonomy" id="3702"/>
    <lineage>
        <taxon>Eukaryota</taxon>
        <taxon>Viridiplantae</taxon>
        <taxon>Streptophyta</taxon>
        <taxon>Embryophyta</taxon>
        <taxon>Tracheophyta</taxon>
        <taxon>Spermatophyta</taxon>
        <taxon>Magnoliopsida</taxon>
        <taxon>eudicotyledons</taxon>
        <taxon>Gunneridae</taxon>
        <taxon>Pentapetalae</taxon>
        <taxon>rosids</taxon>
        <taxon>malvids</taxon>
        <taxon>Brassicales</taxon>
        <taxon>Brassicaceae</taxon>
        <taxon>Camelineae</taxon>
        <taxon>Arabidopsis</taxon>
    </lineage>
</organism>
<evidence type="ECO:0000250" key="1">
    <source>
        <dbReference type="UniProtKB" id="Q9FFF6"/>
    </source>
</evidence>
<evidence type="ECO:0000255" key="2">
    <source>
        <dbReference type="PROSITE-ProRule" id="PRU00805"/>
    </source>
</evidence>
<evidence type="ECO:0000269" key="3">
    <source>
    </source>
</evidence>
<evidence type="ECO:0000269" key="4">
    <source>
    </source>
</evidence>
<evidence type="ECO:0000269" key="5">
    <source>
    </source>
</evidence>
<evidence type="ECO:0000269" key="6">
    <source>
    </source>
</evidence>
<evidence type="ECO:0000303" key="7">
    <source>
    </source>
</evidence>
<evidence type="ECO:0000303" key="8">
    <source>
    </source>
</evidence>
<evidence type="ECO:0000305" key="9"/>
<evidence type="ECO:0000312" key="10">
    <source>
        <dbReference type="Araport" id="AT3G11180"/>
    </source>
</evidence>
<evidence type="ECO:0000312" key="11">
    <source>
        <dbReference type="EMBL" id="AAF01507.1"/>
    </source>
</evidence>
<evidence type="ECO:0000312" key="12">
    <source>
        <dbReference type="EMBL" id="AAG50980.1"/>
    </source>
</evidence>
<dbReference type="EC" id="1.14.11.-" evidence="5"/>
<dbReference type="EMBL" id="AC009991">
    <property type="protein sequence ID" value="AAF01507.1"/>
    <property type="molecule type" value="Genomic_DNA"/>
</dbReference>
<dbReference type="EMBL" id="AC073395">
    <property type="protein sequence ID" value="AAG50980.1"/>
    <property type="molecule type" value="Genomic_DNA"/>
</dbReference>
<dbReference type="EMBL" id="CP002686">
    <property type="protein sequence ID" value="AEE75010.1"/>
    <property type="molecule type" value="Genomic_DNA"/>
</dbReference>
<dbReference type="RefSeq" id="NP_187728.1">
    <molecule id="Q9SRM3-1"/>
    <property type="nucleotide sequence ID" value="NM_111954.3"/>
</dbReference>
<dbReference type="SMR" id="Q9SRM3"/>
<dbReference type="FunCoup" id="Q9SRM3">
    <property type="interactions" value="27"/>
</dbReference>
<dbReference type="STRING" id="3702.Q9SRM3"/>
<dbReference type="iPTMnet" id="Q9SRM3"/>
<dbReference type="PaxDb" id="3702-AT3G11180.2"/>
<dbReference type="ProteomicsDB" id="222155">
    <molecule id="Q9SRM3-1"/>
</dbReference>
<dbReference type="EnsemblPlants" id="AT3G11180.1">
    <molecule id="Q9SRM3-1"/>
    <property type="protein sequence ID" value="AT3G11180.1"/>
    <property type="gene ID" value="AT3G11180"/>
</dbReference>
<dbReference type="GeneID" id="820289"/>
<dbReference type="Gramene" id="AT3G11180.1">
    <molecule id="Q9SRM3-1"/>
    <property type="protein sequence ID" value="AT3G11180.1"/>
    <property type="gene ID" value="AT3G11180"/>
</dbReference>
<dbReference type="KEGG" id="ath:AT3G11180"/>
<dbReference type="Araport" id="AT3G11180"/>
<dbReference type="TAIR" id="AT3G11180">
    <property type="gene designation" value="JOX1"/>
</dbReference>
<dbReference type="eggNOG" id="KOG0143">
    <property type="taxonomic scope" value="Eukaryota"/>
</dbReference>
<dbReference type="HOGENOM" id="CLU_010119_16_0_1"/>
<dbReference type="InParanoid" id="Q9SRM3"/>
<dbReference type="OMA" id="NSHPHAF"/>
<dbReference type="PhylomeDB" id="Q9SRM3"/>
<dbReference type="PRO" id="PR:Q9SRM3"/>
<dbReference type="Proteomes" id="UP000006548">
    <property type="component" value="Chromosome 3"/>
</dbReference>
<dbReference type="ExpressionAtlas" id="Q9SRM3">
    <property type="expression patterns" value="baseline and differential"/>
</dbReference>
<dbReference type="GO" id="GO:0051213">
    <property type="term" value="F:dioxygenase activity"/>
    <property type="evidence" value="ECO:0007669"/>
    <property type="project" value="UniProtKB-KW"/>
</dbReference>
<dbReference type="GO" id="GO:0005506">
    <property type="term" value="F:iron ion binding"/>
    <property type="evidence" value="ECO:0000250"/>
    <property type="project" value="UniProtKB"/>
</dbReference>
<dbReference type="GO" id="GO:0120091">
    <property type="term" value="F:jasmonic acid hydrolase"/>
    <property type="evidence" value="ECO:0000314"/>
    <property type="project" value="UniProtKB"/>
</dbReference>
<dbReference type="GO" id="GO:0006952">
    <property type="term" value="P:defense response"/>
    <property type="evidence" value="ECO:0007669"/>
    <property type="project" value="UniProtKB-KW"/>
</dbReference>
<dbReference type="GO" id="GO:1900366">
    <property type="term" value="P:negative regulation of defense response to insect"/>
    <property type="evidence" value="ECO:0000315"/>
    <property type="project" value="UniProtKB"/>
</dbReference>
<dbReference type="GO" id="GO:1900150">
    <property type="term" value="P:regulation of defense response to fungus"/>
    <property type="evidence" value="ECO:0000315"/>
    <property type="project" value="UniProtKB"/>
</dbReference>
<dbReference type="GO" id="GO:2000022">
    <property type="term" value="P:regulation of jasmonic acid mediated signaling pathway"/>
    <property type="evidence" value="ECO:0000315"/>
    <property type="project" value="UniProtKB"/>
</dbReference>
<dbReference type="FunFam" id="2.60.120.330:FF:000008">
    <property type="entry name" value="Jasmonate-regulated gene 21"/>
    <property type="match status" value="1"/>
</dbReference>
<dbReference type="Gene3D" id="2.60.120.330">
    <property type="entry name" value="B-lactam Antibiotic, Isopenicillin N Synthase, Chain"/>
    <property type="match status" value="1"/>
</dbReference>
<dbReference type="InterPro" id="IPR026992">
    <property type="entry name" value="DIOX_N"/>
</dbReference>
<dbReference type="InterPro" id="IPR044861">
    <property type="entry name" value="IPNS-like_FE2OG_OXY"/>
</dbReference>
<dbReference type="InterPro" id="IPR027443">
    <property type="entry name" value="IPNS-like_sf"/>
</dbReference>
<dbReference type="InterPro" id="IPR005123">
    <property type="entry name" value="Oxoglu/Fe-dep_dioxygenase_dom"/>
</dbReference>
<dbReference type="InterPro" id="IPR050295">
    <property type="entry name" value="Plant_2OG-oxidoreductases"/>
</dbReference>
<dbReference type="PANTHER" id="PTHR47991">
    <property type="entry name" value="OXOGLUTARATE/IRON-DEPENDENT DIOXYGENASE"/>
    <property type="match status" value="1"/>
</dbReference>
<dbReference type="Pfam" id="PF03171">
    <property type="entry name" value="2OG-FeII_Oxy"/>
    <property type="match status" value="1"/>
</dbReference>
<dbReference type="Pfam" id="PF14226">
    <property type="entry name" value="DIOX_N"/>
    <property type="match status" value="1"/>
</dbReference>
<dbReference type="PRINTS" id="PR00682">
    <property type="entry name" value="IPNSYNTHASE"/>
</dbReference>
<dbReference type="SUPFAM" id="SSF51197">
    <property type="entry name" value="Clavaminate synthase-like"/>
    <property type="match status" value="1"/>
</dbReference>
<dbReference type="PROSITE" id="PS51471">
    <property type="entry name" value="FE2OG_OXY"/>
    <property type="match status" value="1"/>
</dbReference>
<gene>
    <name evidence="7" type="primary">JOX1</name>
    <name evidence="8" type="synonym">JAO1</name>
    <name evidence="10" type="ordered locus">At3g11180</name>
    <name evidence="12" type="ORF">F11B9.11</name>
    <name evidence="11" type="ORF">F9F8.3</name>
</gene>
<protein>
    <recommendedName>
        <fullName evidence="7">Jasmonate-induced oxygenase 1</fullName>
        <ecNumber evidence="5">1.14.11.-</ecNumber>
    </recommendedName>
    <alternativeName>
        <fullName evidence="9">2-oxoglutarate-dependent dioxygenase JOX1</fullName>
    </alternativeName>
    <alternativeName>
        <fullName evidence="8">Jasmonic acid oxidase 1</fullName>
    </alternativeName>
</protein>
<keyword id="KW-0025">Alternative splicing</keyword>
<keyword id="KW-0223">Dioxygenase</keyword>
<keyword id="KW-0408">Iron</keyword>
<keyword id="KW-1184">Jasmonic acid signaling pathway</keyword>
<keyword id="KW-0479">Metal-binding</keyword>
<keyword id="KW-0560">Oxidoreductase</keyword>
<keyword id="KW-0611">Plant defense</keyword>
<keyword id="KW-1185">Reference proteome</keyword>
<feature type="chain" id="PRO_0000438436" description="Jasmonate-induced oxygenase 1">
    <location>
        <begin position="1"/>
        <end position="400"/>
    </location>
</feature>
<feature type="domain" description="Fe2OG dioxygenase" evidence="2">
    <location>
        <begin position="248"/>
        <end position="349"/>
    </location>
</feature>
<feature type="binding site" evidence="1">
    <location>
        <position position="254"/>
    </location>
    <ligand>
        <name>jasmonate</name>
        <dbReference type="ChEBI" id="CHEBI:58431"/>
    </ligand>
</feature>
<feature type="binding site" evidence="1">
    <location>
        <position position="256"/>
    </location>
    <ligand>
        <name>2-oxoglutarate</name>
        <dbReference type="ChEBI" id="CHEBI:16810"/>
    </ligand>
</feature>
<feature type="binding site" evidence="1">
    <location>
        <position position="258"/>
    </location>
    <ligand>
        <name>2-oxoglutarate</name>
        <dbReference type="ChEBI" id="CHEBI:16810"/>
    </ligand>
</feature>
<feature type="binding site" evidence="2">
    <location>
        <position position="273"/>
    </location>
    <ligand>
        <name>Fe cation</name>
        <dbReference type="ChEBI" id="CHEBI:24875"/>
    </ligand>
</feature>
<feature type="binding site" evidence="2">
    <location>
        <position position="275"/>
    </location>
    <ligand>
        <name>Fe cation</name>
        <dbReference type="ChEBI" id="CHEBI:24875"/>
    </ligand>
</feature>
<feature type="binding site" evidence="2">
    <location>
        <position position="330"/>
    </location>
    <ligand>
        <name>Fe cation</name>
        <dbReference type="ChEBI" id="CHEBI:24875"/>
    </ligand>
</feature>
<feature type="binding site" evidence="2">
    <location>
        <position position="340"/>
    </location>
    <ligand>
        <name>2-oxoglutarate</name>
        <dbReference type="ChEBI" id="CHEBI:16810"/>
    </ligand>
</feature>
<feature type="binding site" evidence="1">
    <location>
        <position position="342"/>
    </location>
    <ligand>
        <name>2-oxoglutarate</name>
        <dbReference type="ChEBI" id="CHEBI:16810"/>
    </ligand>
</feature>
<feature type="binding site" evidence="1">
    <location>
        <position position="379"/>
    </location>
    <ligand>
        <name>jasmonate</name>
        <dbReference type="ChEBI" id="CHEBI:58431"/>
    </ligand>
</feature>
<feature type="binding site" evidence="1">
    <location>
        <position position="383"/>
    </location>
    <ligand>
        <name>jasmonate</name>
        <dbReference type="ChEBI" id="CHEBI:58431"/>
    </ligand>
</feature>
<name>JOX1_ARATH</name>
<sequence length="400" mass="45620">MNNLDEIKIESKTCLNDQEQEVKIDNMHMSDQDKNKIEIKNKSGLGEKWPEPIVRVQSLAESNLTSLPDRYIKPPSQRPQTTIIDHQPEVADINIPIIDLDSLFSGNEDDKKRISEACREWGFFQVINHGVKPELMDAARETWKSFFNLPVEAKEVYSNSPRTYEGYGSRLGVEKGAILDWNDYYYLHFLPLALKDFNKWPSLPSNIREMNDEYGKELVKLGGRLMTILSSNLGLRAEQLQEAFGGEDVGACLRVNYYPKCPQPELALGLSPHSDPGGMTILLPDDQVVGLQVRHGDTWITVNPLRHAFIVNIGDQIQILSNSKYKSVEHRVIVNSEKERVSLAFFYNPKSDIPIQPMQQLVTSTMPPLYPPMTFDQYRLFIRTQGPRGKSHVESHISPR</sequence>
<comment type="function">
    <text evidence="5">2-oxoglutarate-dependent dioxygenase involved in the oxidation of jasmonate (JA), a stress-induced phytohormone synthesized in response to attack by pathogens and herbivores, which triggers the activation of defense responses via the JA-mediated signaling pathway (PubMed:28559313). Converts JA to 12-hydroxyjasmonate (12OH-JA), an inactive form of JA (PubMed:28559313). Prevents over-accumulation of JA and indirectly its bioactive form JA-Ile under stress response (PubMed:28559313). Acts as a negative regulator of JA-mediated defense signaling, by contributing to 12OH-JA accumulation, which represses JA defense responses upon infection by the fungal pathogen Botrytis cinerea and the herbivorous caterpillar Mamestra brassicae (PubMed:28559313).</text>
</comment>
<comment type="catalytic activity">
    <reaction evidence="5">
        <text>jasmonate + 2-oxoglutarate + O2 = (1R,2R)-12-hydroxyjasmonate + succinate + CO2</text>
        <dbReference type="Rhea" id="RHEA:67144"/>
        <dbReference type="ChEBI" id="CHEBI:15379"/>
        <dbReference type="ChEBI" id="CHEBI:16526"/>
        <dbReference type="ChEBI" id="CHEBI:16810"/>
        <dbReference type="ChEBI" id="CHEBI:30031"/>
        <dbReference type="ChEBI" id="CHEBI:58431"/>
        <dbReference type="ChEBI" id="CHEBI:132022"/>
    </reaction>
    <physiologicalReaction direction="left-to-right" evidence="5">
        <dbReference type="Rhea" id="RHEA:67145"/>
    </physiologicalReaction>
</comment>
<comment type="cofactor">
    <cofactor evidence="5">
        <name>L-ascorbate</name>
        <dbReference type="ChEBI" id="CHEBI:38290"/>
    </cofactor>
</comment>
<comment type="cofactor">
    <cofactor evidence="2 5">
        <name>Fe(2+)</name>
        <dbReference type="ChEBI" id="CHEBI:29033"/>
    </cofactor>
    <text evidence="2">Binds 1 Fe(2+) ion per subunit.</text>
</comment>
<comment type="alternative products">
    <event type="alternative splicing"/>
    <isoform>
        <id>Q9SRM3-1</id>
        <name>1</name>
        <sequence type="displayed"/>
    </isoform>
    <text evidence="9">A number of isoforms are produced. According to EST sequences.</text>
</comment>
<comment type="developmental stage">
    <text evidence="3 4">Expressed during pollen germination and pollen tube growth.</text>
</comment>
<comment type="induction">
    <text evidence="5 6">Induced at low levels by wounding (PubMed:28760569). Induced by methyl jasmonate (MeJA), infection by the fungal pathogen Botrytis cinerea and infestation with the caterpillar Mamestra brassicae (PubMed:28559313).</text>
</comment>
<comment type="disruption phenotype">
    <text evidence="5">The quadruple mutant jox1, jox2, jox3 and jox4 exhibit reduced root and shoot growth, delayed flowering, reduced seed production, constitutively elevated jasmonate and jasmonoyl-L-isoleucine levels, and enhanced resistance to the necrotrophic fungal pathogen Botrytis cinerea and the herbivorous caterpillar Mamestra brassicae.</text>
</comment>
<comment type="similarity">
    <text evidence="9">Belongs to the iron/ascorbate-dependent oxidoreductase family.</text>
</comment>